<comment type="function">
    <text>Receptor for the peptide pheromone a factor.</text>
</comment>
<comment type="interaction">
    <interactant intactId="EBI-18366">
        <id>P06783</id>
    </interactant>
    <interactant intactId="EBI-6323511">
        <id>D6VTK4</id>
        <label>STE2</label>
    </interactant>
    <organismsDiffer>false</organismsDiffer>
    <experiments>2</experiments>
</comment>
<comment type="subcellular location">
    <subcellularLocation>
        <location>Membrane</location>
        <topology>Multi-pass membrane protein</topology>
    </subcellularLocation>
</comment>
<comment type="similarity">
    <text evidence="3">Belongs to the G-protein coupled receptor 4 family.</text>
</comment>
<reference key="1">
    <citation type="journal article" date="1986" name="Proc. Natl. Acad. Sci. U.S.A.">
        <title>Evidence the yeast STE3 gene encodes a receptor for the peptide pheromone a factor: gene sequence and implications for the structure of the presumed receptor.</title>
        <authorList>
            <person name="Hagen D.C."/>
            <person name="McCaffrey G."/>
            <person name="Sprague G.F. Jr."/>
        </authorList>
    </citation>
    <scope>NUCLEOTIDE SEQUENCE [GENOMIC DNA]</scope>
</reference>
<reference key="2">
    <citation type="journal article" date="1985" name="EMBO J.">
        <title>Nucleotide sequences of STE2 and STE3, cell type-specific sterile genes from Saccharomyces cerevisiae.</title>
        <authorList>
            <person name="Nakayama N."/>
            <person name="Miyajima A."/>
            <person name="Arai K."/>
        </authorList>
    </citation>
    <scope>NUCLEOTIDE SEQUENCE [GENOMIC DNA]</scope>
</reference>
<reference key="3">
    <citation type="journal article" date="1993" name="Yeast">
        <title>Sequencing and analysis of 51.6 kilobases on the left arm of chromosome XI from Saccharomyces cerevisiae reveals 23 open reading frames including the FAS1 gene.</title>
        <authorList>
            <person name="Wiemann S."/>
            <person name="Voss H."/>
            <person name="Schwager C."/>
            <person name="Rupp T."/>
            <person name="Stegemann J."/>
            <person name="Zimmermann J."/>
            <person name="Grothues D."/>
            <person name="Sensen C."/>
            <person name="Erfle H."/>
            <person name="Hewitt N."/>
            <person name="Banrevi A."/>
            <person name="Ansorge W."/>
        </authorList>
    </citation>
    <scope>NUCLEOTIDE SEQUENCE [GENOMIC DNA]</scope>
</reference>
<reference key="4">
    <citation type="journal article" date="1994" name="Nature">
        <title>Complete DNA sequence of yeast chromosome XI.</title>
        <authorList>
            <person name="Dujon B."/>
            <person name="Alexandraki D."/>
            <person name="Andre B."/>
            <person name="Ansorge W."/>
            <person name="Baladron V."/>
            <person name="Ballesta J.P.G."/>
            <person name="Banrevi A."/>
            <person name="Bolle P.-A."/>
            <person name="Bolotin-Fukuhara M."/>
            <person name="Bossier P."/>
            <person name="Bou G."/>
            <person name="Boyer J."/>
            <person name="Buitrago M.J."/>
            <person name="Cheret G."/>
            <person name="Colleaux L."/>
            <person name="Daignan-Fornier B."/>
            <person name="del Rey F."/>
            <person name="Dion C."/>
            <person name="Domdey H."/>
            <person name="Duesterhoeft A."/>
            <person name="Duesterhus S."/>
            <person name="Entian K.-D."/>
            <person name="Erfle H."/>
            <person name="Esteban P.F."/>
            <person name="Feldmann H."/>
            <person name="Fernandes L."/>
            <person name="Fobo G.M."/>
            <person name="Fritz C."/>
            <person name="Fukuhara H."/>
            <person name="Gabel C."/>
            <person name="Gaillon L."/>
            <person name="Garcia-Cantalejo J.M."/>
            <person name="Garcia-Ramirez J.J."/>
            <person name="Gent M.E."/>
            <person name="Ghazvini M."/>
            <person name="Goffeau A."/>
            <person name="Gonzalez A."/>
            <person name="Grothues D."/>
            <person name="Guerreiro P."/>
            <person name="Hegemann J.H."/>
            <person name="Hewitt N."/>
            <person name="Hilger F."/>
            <person name="Hollenberg C.P."/>
            <person name="Horaitis O."/>
            <person name="Indge K.J."/>
            <person name="Jacquier A."/>
            <person name="James C.M."/>
            <person name="Jauniaux J.-C."/>
            <person name="Jimenez A."/>
            <person name="Keuchel H."/>
            <person name="Kirchrath L."/>
            <person name="Kleine K."/>
            <person name="Koetter P."/>
            <person name="Legrain P."/>
            <person name="Liebl S."/>
            <person name="Louis E.J."/>
            <person name="Maia e Silva A."/>
            <person name="Marck C."/>
            <person name="Monnier A.-L."/>
            <person name="Moestl D."/>
            <person name="Mueller S."/>
            <person name="Obermaier B."/>
            <person name="Oliver S.G."/>
            <person name="Pallier C."/>
            <person name="Pascolo S."/>
            <person name="Pfeiffer F."/>
            <person name="Philippsen P."/>
            <person name="Planta R.J."/>
            <person name="Pohl F.M."/>
            <person name="Pohl T.M."/>
            <person name="Poehlmann R."/>
            <person name="Portetelle D."/>
            <person name="Purnelle B."/>
            <person name="Puzos V."/>
            <person name="Ramezani Rad M."/>
            <person name="Rasmussen S.W."/>
            <person name="Remacha M.A."/>
            <person name="Revuelta J.L."/>
            <person name="Richard G.-F."/>
            <person name="Rieger M."/>
            <person name="Rodrigues-Pousada C."/>
            <person name="Rose M."/>
            <person name="Rupp T."/>
            <person name="Santos M.A."/>
            <person name="Schwager C."/>
            <person name="Sensen C."/>
            <person name="Skala J."/>
            <person name="Soares H."/>
            <person name="Sor F."/>
            <person name="Stegemann J."/>
            <person name="Tettelin H."/>
            <person name="Thierry A."/>
            <person name="Tzermia M."/>
            <person name="Urrestarazu L.A."/>
            <person name="van Dyck L."/>
            <person name="van Vliet-Reedijk J.C."/>
            <person name="Valens M."/>
            <person name="Vandenbol M."/>
            <person name="Vilela C."/>
            <person name="Vissers S."/>
            <person name="von Wettstein D."/>
            <person name="Voss H."/>
            <person name="Wiemann S."/>
            <person name="Xu G."/>
            <person name="Zimmermann J."/>
            <person name="Haasemann M."/>
            <person name="Becker I."/>
            <person name="Mewes H.-W."/>
        </authorList>
    </citation>
    <scope>NUCLEOTIDE SEQUENCE [LARGE SCALE GENOMIC DNA]</scope>
    <source>
        <strain>ATCC 204508 / S288c</strain>
    </source>
</reference>
<reference key="5">
    <citation type="journal article" date="2014" name="G3 (Bethesda)">
        <title>The reference genome sequence of Saccharomyces cerevisiae: Then and now.</title>
        <authorList>
            <person name="Engel S.R."/>
            <person name="Dietrich F.S."/>
            <person name="Fisk D.G."/>
            <person name="Binkley G."/>
            <person name="Balakrishnan R."/>
            <person name="Costanzo M.C."/>
            <person name="Dwight S.S."/>
            <person name="Hitz B.C."/>
            <person name="Karra K."/>
            <person name="Nash R.S."/>
            <person name="Weng S."/>
            <person name="Wong E.D."/>
            <person name="Lloyd P."/>
            <person name="Skrzypek M.S."/>
            <person name="Miyasato S.R."/>
            <person name="Simison M."/>
            <person name="Cherry J.M."/>
        </authorList>
    </citation>
    <scope>GENOME REANNOTATION</scope>
    <source>
        <strain>ATCC 204508 / S288c</strain>
    </source>
</reference>
<reference key="6">
    <citation type="journal article" date="2007" name="Genome Res.">
        <title>Approaching a complete repository of sequence-verified protein-encoding clones for Saccharomyces cerevisiae.</title>
        <authorList>
            <person name="Hu Y."/>
            <person name="Rolfs A."/>
            <person name="Bhullar B."/>
            <person name="Murthy T.V.S."/>
            <person name="Zhu C."/>
            <person name="Berger M.F."/>
            <person name="Camargo A.A."/>
            <person name="Kelley F."/>
            <person name="McCarron S."/>
            <person name="Jepson D."/>
            <person name="Richardson A."/>
            <person name="Raphael J."/>
            <person name="Moreira D."/>
            <person name="Taycher E."/>
            <person name="Zuo D."/>
            <person name="Mohr S."/>
            <person name="Kane M.F."/>
            <person name="Williamson J."/>
            <person name="Simpson A.J.G."/>
            <person name="Bulyk M.L."/>
            <person name="Harlow E."/>
            <person name="Marsischky G."/>
            <person name="Kolodner R.D."/>
            <person name="LaBaer J."/>
        </authorList>
    </citation>
    <scope>NUCLEOTIDE SEQUENCE [GENOMIC DNA]</scope>
    <source>
        <strain>ATCC 204508 / S288c</strain>
    </source>
</reference>
<reference key="7">
    <citation type="journal article" date="2006" name="Proc. Natl. Acad. Sci. U.S.A.">
        <title>A global topology map of the Saccharomyces cerevisiae membrane proteome.</title>
        <authorList>
            <person name="Kim H."/>
            <person name="Melen K."/>
            <person name="Oesterberg M."/>
            <person name="von Heijne G."/>
        </authorList>
    </citation>
    <scope>TOPOLOGY [LARGE SCALE ANALYSIS]</scope>
    <source>
        <strain>ATCC 208353 / W303-1A</strain>
    </source>
</reference>
<protein>
    <recommendedName>
        <fullName>Pheromone a factor receptor</fullName>
    </recommendedName>
</protein>
<dbReference type="EMBL" id="M12239">
    <property type="protein sequence ID" value="AAA35113.1"/>
    <property type="molecule type" value="Genomic_DNA"/>
</dbReference>
<dbReference type="EMBL" id="X03011">
    <property type="protein sequence ID" value="CAA26795.1"/>
    <property type="molecule type" value="Genomic_DNA"/>
</dbReference>
<dbReference type="EMBL" id="X74151">
    <property type="protein sequence ID" value="CAA52261.1"/>
    <property type="molecule type" value="Genomic_DNA"/>
</dbReference>
<dbReference type="EMBL" id="Z28177">
    <property type="protein sequence ID" value="CAA82019.1"/>
    <property type="molecule type" value="Genomic_DNA"/>
</dbReference>
<dbReference type="EMBL" id="AY692742">
    <property type="protein sequence ID" value="AAT92761.1"/>
    <property type="molecule type" value="Genomic_DNA"/>
</dbReference>
<dbReference type="EMBL" id="BK006944">
    <property type="protein sequence ID" value="DAA08989.1"/>
    <property type="molecule type" value="Genomic_DNA"/>
</dbReference>
<dbReference type="PIR" id="B24670">
    <property type="entry name" value="B24670"/>
</dbReference>
<dbReference type="RefSeq" id="NP_012743.1">
    <property type="nucleotide sequence ID" value="NM_001179744.1"/>
</dbReference>
<dbReference type="BioGRID" id="33961">
    <property type="interactions" value="22"/>
</dbReference>
<dbReference type="DIP" id="DIP-1146N"/>
<dbReference type="FunCoup" id="P06783">
    <property type="interactions" value="172"/>
</dbReference>
<dbReference type="IntAct" id="P06783">
    <property type="interactions" value="3"/>
</dbReference>
<dbReference type="MINT" id="P06783"/>
<dbReference type="STRING" id="4932.YKL178C"/>
<dbReference type="TCDB" id="9.B.45.2.1">
    <property type="family name" value="the fungal mating-type pheromone receptor (mat-pr) family"/>
</dbReference>
<dbReference type="iPTMnet" id="P06783"/>
<dbReference type="PaxDb" id="4932-YKL178C"/>
<dbReference type="PeptideAtlas" id="P06783"/>
<dbReference type="DNASU" id="853677"/>
<dbReference type="EnsemblFungi" id="YKL178C_mRNA">
    <property type="protein sequence ID" value="YKL178C"/>
    <property type="gene ID" value="YKL178C"/>
</dbReference>
<dbReference type="GeneID" id="853677"/>
<dbReference type="KEGG" id="sce:YKL178C"/>
<dbReference type="AGR" id="SGD:S000001661"/>
<dbReference type="SGD" id="S000001661">
    <property type="gene designation" value="STE3"/>
</dbReference>
<dbReference type="VEuPathDB" id="FungiDB:YKL178C"/>
<dbReference type="eggNOG" id="ENOG502S44N">
    <property type="taxonomic scope" value="Eukaryota"/>
</dbReference>
<dbReference type="HOGENOM" id="CLU_027592_4_0_1"/>
<dbReference type="InParanoid" id="P06783"/>
<dbReference type="OMA" id="IPPLIWH"/>
<dbReference type="OrthoDB" id="2874149at2759"/>
<dbReference type="BioCyc" id="YEAST:G3O-31944-MONOMER"/>
<dbReference type="BioGRID-ORCS" id="853677">
    <property type="hits" value="1 hit in 10 CRISPR screens"/>
</dbReference>
<dbReference type="PRO" id="PR:P06783"/>
<dbReference type="Proteomes" id="UP000002311">
    <property type="component" value="Chromosome XI"/>
</dbReference>
<dbReference type="RNAct" id="P06783">
    <property type="molecule type" value="protein"/>
</dbReference>
<dbReference type="GO" id="GO:0005783">
    <property type="term" value="C:endoplasmic reticulum"/>
    <property type="evidence" value="ECO:0007005"/>
    <property type="project" value="SGD"/>
</dbReference>
<dbReference type="GO" id="GO:0005886">
    <property type="term" value="C:plasma membrane"/>
    <property type="evidence" value="ECO:0000314"/>
    <property type="project" value="SGD"/>
</dbReference>
<dbReference type="GO" id="GO:0005775">
    <property type="term" value="C:vacuolar lumen"/>
    <property type="evidence" value="ECO:0000314"/>
    <property type="project" value="CAFA"/>
</dbReference>
<dbReference type="GO" id="GO:0004933">
    <property type="term" value="F:mating-type a-factor pheromone receptor activity"/>
    <property type="evidence" value="ECO:0000315"/>
    <property type="project" value="SGD"/>
</dbReference>
<dbReference type="GO" id="GO:0004932">
    <property type="term" value="F:mating-type factor pheromone receptor activity"/>
    <property type="evidence" value="ECO:0000318"/>
    <property type="project" value="GO_Central"/>
</dbReference>
<dbReference type="GO" id="GO:0000755">
    <property type="term" value="P:cytogamy"/>
    <property type="evidence" value="ECO:0000314"/>
    <property type="project" value="SGD"/>
</dbReference>
<dbReference type="GO" id="GO:0000750">
    <property type="term" value="P:pheromone-dependent signal transduction involved in conjugation with cellular fusion"/>
    <property type="evidence" value="ECO:0000315"/>
    <property type="project" value="SGD"/>
</dbReference>
<dbReference type="CDD" id="cd14966">
    <property type="entry name" value="7tmD_STE3"/>
    <property type="match status" value="1"/>
</dbReference>
<dbReference type="InterPro" id="IPR001499">
    <property type="entry name" value="GPCR_STE3"/>
</dbReference>
<dbReference type="PANTHER" id="PTHR28097">
    <property type="entry name" value="PHEROMONE A FACTOR RECEPTOR"/>
    <property type="match status" value="1"/>
</dbReference>
<dbReference type="PANTHER" id="PTHR28097:SF1">
    <property type="entry name" value="PHEROMONE A FACTOR RECEPTOR"/>
    <property type="match status" value="1"/>
</dbReference>
<dbReference type="Pfam" id="PF02076">
    <property type="entry name" value="STE3"/>
    <property type="match status" value="1"/>
</dbReference>
<dbReference type="PRINTS" id="PR00899">
    <property type="entry name" value="GPCRSTE3"/>
</dbReference>
<accession>P06783</accession>
<accession>D6VX23</accession>
<keyword id="KW-0297">G-protein coupled receptor</keyword>
<keyword id="KW-0472">Membrane</keyword>
<keyword id="KW-0589">Pheromone response</keyword>
<keyword id="KW-0675">Receptor</keyword>
<keyword id="KW-1185">Reference proteome</keyword>
<keyword id="KW-0807">Transducer</keyword>
<keyword id="KW-0812">Transmembrane</keyword>
<keyword id="KW-1133">Transmembrane helix</keyword>
<organism>
    <name type="scientific">Saccharomyces cerevisiae (strain ATCC 204508 / S288c)</name>
    <name type="common">Baker's yeast</name>
    <dbReference type="NCBI Taxonomy" id="559292"/>
    <lineage>
        <taxon>Eukaryota</taxon>
        <taxon>Fungi</taxon>
        <taxon>Dikarya</taxon>
        <taxon>Ascomycota</taxon>
        <taxon>Saccharomycotina</taxon>
        <taxon>Saccharomycetes</taxon>
        <taxon>Saccharomycetales</taxon>
        <taxon>Saccharomycetaceae</taxon>
        <taxon>Saccharomyces</taxon>
    </lineage>
</organism>
<evidence type="ECO:0000255" key="1"/>
<evidence type="ECO:0000256" key="2">
    <source>
        <dbReference type="SAM" id="MobiDB-lite"/>
    </source>
</evidence>
<evidence type="ECO:0000305" key="3"/>
<name>STE3_YEAST</name>
<feature type="chain" id="PRO_0000195079" description="Pheromone a factor receptor">
    <location>
        <begin position="1"/>
        <end position="470"/>
    </location>
</feature>
<feature type="topological domain" description="Extracellular" evidence="1">
    <location>
        <begin position="1"/>
        <end position="5"/>
    </location>
</feature>
<feature type="transmembrane region" description="Helical" evidence="1">
    <location>
        <begin position="6"/>
        <end position="23"/>
    </location>
</feature>
<feature type="topological domain" description="Cytoplasmic" evidence="1">
    <location>
        <begin position="24"/>
        <end position="29"/>
    </location>
</feature>
<feature type="transmembrane region" description="Helical" evidence="1">
    <location>
        <begin position="30"/>
        <end position="53"/>
    </location>
</feature>
<feature type="topological domain" description="Extracellular" evidence="1">
    <location>
        <begin position="54"/>
        <end position="70"/>
    </location>
</feature>
<feature type="transmembrane region" description="Helical" evidence="1">
    <location>
        <begin position="71"/>
        <end position="98"/>
    </location>
</feature>
<feature type="topological domain" description="Cytoplasmic" evidence="1">
    <location>
        <begin position="99"/>
        <end position="116"/>
    </location>
</feature>
<feature type="transmembrane region" description="Helical" evidence="1">
    <location>
        <begin position="117"/>
        <end position="134"/>
    </location>
</feature>
<feature type="topological domain" description="Extracellular" evidence="1">
    <location>
        <begin position="135"/>
        <end position="155"/>
    </location>
</feature>
<feature type="transmembrane region" description="Helical" evidence="1">
    <location>
        <begin position="156"/>
        <end position="183"/>
    </location>
</feature>
<feature type="topological domain" description="Cytoplasmic" evidence="1">
    <location>
        <begin position="184"/>
        <end position="205"/>
    </location>
</feature>
<feature type="transmembrane region" description="Helical" evidence="1">
    <location>
        <begin position="206"/>
        <end position="228"/>
    </location>
</feature>
<feature type="topological domain" description="Extracellular" evidence="1">
    <location>
        <begin position="229"/>
        <end position="266"/>
    </location>
</feature>
<feature type="transmembrane region" description="Helical" evidence="1">
    <location>
        <begin position="267"/>
        <end position="285"/>
    </location>
</feature>
<feature type="topological domain" description="Cytoplasmic" evidence="1">
    <location>
        <begin position="286"/>
        <end position="470"/>
    </location>
</feature>
<feature type="region of interest" description="Hydrophilic">
    <location>
        <begin position="300"/>
        <end position="470"/>
    </location>
</feature>
<feature type="region of interest" description="Disordered" evidence="2">
    <location>
        <begin position="440"/>
        <end position="470"/>
    </location>
</feature>
<proteinExistence type="evidence at protein level"/>
<gene>
    <name type="primary">STE3</name>
    <name type="ordered locus">YKL178C</name>
</gene>
<sequence>MSYKSAIIGLCLLAVILLAPPLAWHSHTKNIPAIILITWLLTMNLTCIVDAAIWSDDDFLTRWDGKGWCDIVIKLQVGANIGISCAVTNIIYNLHTILKADSVLPDLSSWTKIVKDLVISLFTPVMVMGFSYLLQVFRYGIARYNGCQNLLSPTWITTVLYTMWMLIWSFVGAVYATLVLFVFYKKRKDVRDILHCTNSGLNLTRFARLLIFCFIIILVMFPFSVYTFVQDLQQVEGHYTFKNTHSSTIWNTIIKFDPGRPIYNIWLYVLMSYLVFLIFGLGSDALHMYSKFLRSIKLGFVLDMWKRFIDKNKEKRVGILLNKLSSRKESRNPFSTDSENYISTCTENYSPCVGTPISQAHFYVDYRIPDDPRKSQNKSKKYLFADKETDDILDEIDLKESRHIPYVTQGQSFDDEISLGGFSKVTLDYSEKLHNSASSNFEGESLCYSPASKEENSSSNEHSSENTAGP</sequence>